<comment type="catalytic activity">
    <reaction evidence="1">
        <text>urea + 2 H2O + H(+) = hydrogencarbonate + 2 NH4(+)</text>
        <dbReference type="Rhea" id="RHEA:20557"/>
        <dbReference type="ChEBI" id="CHEBI:15377"/>
        <dbReference type="ChEBI" id="CHEBI:15378"/>
        <dbReference type="ChEBI" id="CHEBI:16199"/>
        <dbReference type="ChEBI" id="CHEBI:17544"/>
        <dbReference type="ChEBI" id="CHEBI:28938"/>
        <dbReference type="EC" id="3.5.1.5"/>
    </reaction>
</comment>
<comment type="cofactor">
    <cofactor evidence="1">
        <name>Ni cation</name>
        <dbReference type="ChEBI" id="CHEBI:25516"/>
    </cofactor>
    <text evidence="1">Binds 2 nickel ions per subunit.</text>
</comment>
<comment type="pathway">
    <text evidence="1">Nitrogen metabolism; urea degradation; CO(2) and NH(3) from urea (urease route): step 1/1.</text>
</comment>
<comment type="subunit">
    <text evidence="1">Heterotrimer of UreA (gamma), UreB (beta) and UreC (alpha) subunits. Three heterotrimers associate to form the active enzyme.</text>
</comment>
<comment type="subcellular location">
    <subcellularLocation>
        <location evidence="1">Cytoplasm</location>
    </subcellularLocation>
</comment>
<comment type="PTM">
    <text evidence="1">Carboxylation allows a single lysine to coordinate two nickel ions.</text>
</comment>
<comment type="similarity">
    <text evidence="1">Belongs to the metallo-dependent hydrolases superfamily. Urease alpha subunit family.</text>
</comment>
<organism>
    <name type="scientific">Mycobacterium bovis (strain BCG / Tokyo 172 / ATCC 35737 / TMC 1019)</name>
    <dbReference type="NCBI Taxonomy" id="561275"/>
    <lineage>
        <taxon>Bacteria</taxon>
        <taxon>Bacillati</taxon>
        <taxon>Actinomycetota</taxon>
        <taxon>Actinomycetes</taxon>
        <taxon>Mycobacteriales</taxon>
        <taxon>Mycobacteriaceae</taxon>
        <taxon>Mycobacterium</taxon>
        <taxon>Mycobacterium tuberculosis complex</taxon>
    </lineage>
</organism>
<protein>
    <recommendedName>
        <fullName evidence="1">Urease subunit alpha</fullName>
        <ecNumber evidence="1">3.5.1.5</ecNumber>
    </recommendedName>
    <alternativeName>
        <fullName evidence="1">Urea amidohydrolase subunit alpha</fullName>
    </alternativeName>
</protein>
<feature type="chain" id="PRO_1000188884" description="Urease subunit alpha">
    <location>
        <begin position="1"/>
        <end position="577"/>
    </location>
</feature>
<feature type="domain" description="Urease" evidence="1">
    <location>
        <begin position="136"/>
        <end position="577"/>
    </location>
</feature>
<feature type="active site" description="Proton donor" evidence="1">
    <location>
        <position position="327"/>
    </location>
</feature>
<feature type="binding site" evidence="1">
    <location>
        <position position="141"/>
    </location>
    <ligand>
        <name>Ni(2+)</name>
        <dbReference type="ChEBI" id="CHEBI:49786"/>
        <label>1</label>
    </ligand>
</feature>
<feature type="binding site" evidence="1">
    <location>
        <position position="143"/>
    </location>
    <ligand>
        <name>Ni(2+)</name>
        <dbReference type="ChEBI" id="CHEBI:49786"/>
        <label>1</label>
    </ligand>
</feature>
<feature type="binding site" description="via carbamate group" evidence="1">
    <location>
        <position position="224"/>
    </location>
    <ligand>
        <name>Ni(2+)</name>
        <dbReference type="ChEBI" id="CHEBI:49786"/>
        <label>1</label>
    </ligand>
</feature>
<feature type="binding site" description="via carbamate group" evidence="1">
    <location>
        <position position="224"/>
    </location>
    <ligand>
        <name>Ni(2+)</name>
        <dbReference type="ChEBI" id="CHEBI:49786"/>
        <label>2</label>
    </ligand>
</feature>
<feature type="binding site" evidence="1">
    <location>
        <position position="226"/>
    </location>
    <ligand>
        <name>substrate</name>
    </ligand>
</feature>
<feature type="binding site" evidence="1">
    <location>
        <position position="253"/>
    </location>
    <ligand>
        <name>Ni(2+)</name>
        <dbReference type="ChEBI" id="CHEBI:49786"/>
        <label>2</label>
    </ligand>
</feature>
<feature type="binding site" evidence="1">
    <location>
        <position position="279"/>
    </location>
    <ligand>
        <name>Ni(2+)</name>
        <dbReference type="ChEBI" id="CHEBI:49786"/>
        <label>2</label>
    </ligand>
</feature>
<feature type="binding site" evidence="1">
    <location>
        <position position="367"/>
    </location>
    <ligand>
        <name>Ni(2+)</name>
        <dbReference type="ChEBI" id="CHEBI:49786"/>
        <label>1</label>
    </ligand>
</feature>
<feature type="modified residue" description="N6-carboxylysine" evidence="1">
    <location>
        <position position="224"/>
    </location>
</feature>
<name>URE1_MYCBT</name>
<keyword id="KW-0963">Cytoplasm</keyword>
<keyword id="KW-0378">Hydrolase</keyword>
<keyword id="KW-0479">Metal-binding</keyword>
<keyword id="KW-0533">Nickel</keyword>
<sequence>MARLSRERYAQLYGPTTGDRIRLADTNLLVEVTEDRCGGPGLAGDEAVFGGGKVLRESMGQGRASRADGAPDTVITGAVIIDYWGIIKADIGIRDGRIVGIGKAGNPDIMTGVHRDLVVGPSTEIISGNRRIVTAGTVDCHVHLICPQIIVEALAAGTTTIIGGGTGPAEGTKATTVTPGEWHLARMLESLDGWPVNFALLGKGNTVNPDALWEQLRGGASGFKLHEDWGSTPAAIDTCLAVADVAGVQVALHSDTLNETGFVEDTIGAIAGRSIHAYHTEGAGGGHAPDIITVAAQPNVLPSSTNPTRPHTVNTLDEHLDMLMVCHHLNPRIPEDLAFAESRIRPSTIAAEDVLHDMGAISMIGSDSQAMGRVGEVVLRTWQTAHVMKARRGALEGDPSGSQAADNNRVRRYIAKYTICPAIAHGMDHLIGSVEVGKLADLVLWEPAFFGVRPHVVLKGGAIAWAAMGDANASIPTPQPVLPRPMFGAAAATAAATSVHFVAPQSIDARLADRLAVNRGLAPVADVRAVGKTDLPLNDALPSIEVDPDTFTVRIDGQVWQPQPAAELPMTQRYFLF</sequence>
<dbReference type="EC" id="3.5.1.5" evidence="1"/>
<dbReference type="EMBL" id="AP010918">
    <property type="protein sequence ID" value="BAH26156.1"/>
    <property type="molecule type" value="Genomic_DNA"/>
</dbReference>
<dbReference type="RefSeq" id="WP_003899049.1">
    <property type="nucleotide sequence ID" value="NZ_CP014566.1"/>
</dbReference>
<dbReference type="SMR" id="C1APC7"/>
<dbReference type="MEROPS" id="M38.982"/>
<dbReference type="KEGG" id="mbt:JTY_1870"/>
<dbReference type="HOGENOM" id="CLU_000980_0_0_11"/>
<dbReference type="UniPathway" id="UPA00258">
    <property type="reaction ID" value="UER00370"/>
</dbReference>
<dbReference type="GO" id="GO:0005737">
    <property type="term" value="C:cytoplasm"/>
    <property type="evidence" value="ECO:0007669"/>
    <property type="project" value="UniProtKB-SubCell"/>
</dbReference>
<dbReference type="GO" id="GO:0016151">
    <property type="term" value="F:nickel cation binding"/>
    <property type="evidence" value="ECO:0007669"/>
    <property type="project" value="UniProtKB-UniRule"/>
</dbReference>
<dbReference type="GO" id="GO:0009039">
    <property type="term" value="F:urease activity"/>
    <property type="evidence" value="ECO:0007669"/>
    <property type="project" value="UniProtKB-UniRule"/>
</dbReference>
<dbReference type="GO" id="GO:0043419">
    <property type="term" value="P:urea catabolic process"/>
    <property type="evidence" value="ECO:0007669"/>
    <property type="project" value="UniProtKB-UniRule"/>
</dbReference>
<dbReference type="CDD" id="cd00375">
    <property type="entry name" value="Urease_alpha"/>
    <property type="match status" value="1"/>
</dbReference>
<dbReference type="Gene3D" id="3.20.20.140">
    <property type="entry name" value="Metal-dependent hydrolases"/>
    <property type="match status" value="1"/>
</dbReference>
<dbReference type="Gene3D" id="2.30.40.10">
    <property type="entry name" value="Urease, subunit C, domain 1"/>
    <property type="match status" value="1"/>
</dbReference>
<dbReference type="HAMAP" id="MF_01953">
    <property type="entry name" value="Urease_alpha"/>
    <property type="match status" value="1"/>
</dbReference>
<dbReference type="InterPro" id="IPR006680">
    <property type="entry name" value="Amidohydro-rel"/>
</dbReference>
<dbReference type="InterPro" id="IPR011059">
    <property type="entry name" value="Metal-dep_hydrolase_composite"/>
</dbReference>
<dbReference type="InterPro" id="IPR032466">
    <property type="entry name" value="Metal_Hydrolase"/>
</dbReference>
<dbReference type="InterPro" id="IPR011612">
    <property type="entry name" value="Urease_alpha_N_dom"/>
</dbReference>
<dbReference type="InterPro" id="IPR050112">
    <property type="entry name" value="Urease_alpha_subunit"/>
</dbReference>
<dbReference type="InterPro" id="IPR017950">
    <property type="entry name" value="Urease_AS"/>
</dbReference>
<dbReference type="InterPro" id="IPR005848">
    <property type="entry name" value="Urease_asu"/>
</dbReference>
<dbReference type="InterPro" id="IPR017951">
    <property type="entry name" value="Urease_asu_c"/>
</dbReference>
<dbReference type="InterPro" id="IPR029754">
    <property type="entry name" value="Urease_Ni-bd"/>
</dbReference>
<dbReference type="NCBIfam" id="NF009685">
    <property type="entry name" value="PRK13206.1"/>
    <property type="match status" value="1"/>
</dbReference>
<dbReference type="NCBIfam" id="NF009686">
    <property type="entry name" value="PRK13207.1"/>
    <property type="match status" value="1"/>
</dbReference>
<dbReference type="NCBIfam" id="TIGR01792">
    <property type="entry name" value="urease_alph"/>
    <property type="match status" value="1"/>
</dbReference>
<dbReference type="PANTHER" id="PTHR43440">
    <property type="entry name" value="UREASE"/>
    <property type="match status" value="1"/>
</dbReference>
<dbReference type="PANTHER" id="PTHR43440:SF1">
    <property type="entry name" value="UREASE"/>
    <property type="match status" value="1"/>
</dbReference>
<dbReference type="Pfam" id="PF01979">
    <property type="entry name" value="Amidohydro_1"/>
    <property type="match status" value="1"/>
</dbReference>
<dbReference type="Pfam" id="PF00449">
    <property type="entry name" value="Urease_alpha"/>
    <property type="match status" value="1"/>
</dbReference>
<dbReference type="PRINTS" id="PR01752">
    <property type="entry name" value="UREASE"/>
</dbReference>
<dbReference type="SUPFAM" id="SSF51338">
    <property type="entry name" value="Composite domain of metallo-dependent hydrolases"/>
    <property type="match status" value="2"/>
</dbReference>
<dbReference type="SUPFAM" id="SSF51556">
    <property type="entry name" value="Metallo-dependent hydrolases"/>
    <property type="match status" value="1"/>
</dbReference>
<dbReference type="PROSITE" id="PS01120">
    <property type="entry name" value="UREASE_1"/>
    <property type="match status" value="1"/>
</dbReference>
<dbReference type="PROSITE" id="PS00145">
    <property type="entry name" value="UREASE_2"/>
    <property type="match status" value="1"/>
</dbReference>
<dbReference type="PROSITE" id="PS51368">
    <property type="entry name" value="UREASE_3"/>
    <property type="match status" value="1"/>
</dbReference>
<gene>
    <name evidence="1" type="primary">ureC</name>
    <name type="ordered locus">JTY_1870</name>
</gene>
<accession>C1APC7</accession>
<reference key="1">
    <citation type="journal article" date="2009" name="Vaccine">
        <title>Whole genome sequence analysis of Mycobacterium bovis bacillus Calmette-Guerin (BCG) Tokyo 172: a comparative study of BCG vaccine substrains.</title>
        <authorList>
            <person name="Seki M."/>
            <person name="Honda I."/>
            <person name="Fujita I."/>
            <person name="Yano I."/>
            <person name="Yamamoto S."/>
            <person name="Koyama A."/>
        </authorList>
    </citation>
    <scope>NUCLEOTIDE SEQUENCE [LARGE SCALE GENOMIC DNA]</scope>
    <source>
        <strain>BCG / Tokyo 172 / ATCC 35737 / TMC 1019</strain>
    </source>
</reference>
<evidence type="ECO:0000255" key="1">
    <source>
        <dbReference type="HAMAP-Rule" id="MF_01953"/>
    </source>
</evidence>
<proteinExistence type="inferred from homology"/>